<name>TMOD4_HUMAN</name>
<dbReference type="EMBL" id="AF165217">
    <property type="protein sequence ID" value="AAF01277.1"/>
    <property type="molecule type" value="mRNA"/>
</dbReference>
<dbReference type="EMBL" id="AF177173">
    <property type="protein sequence ID" value="AAF31672.1"/>
    <property type="molecule type" value="mRNA"/>
</dbReference>
<dbReference type="EMBL" id="AF321183">
    <property type="protein sequence ID" value="AAK06765.1"/>
    <property type="molecule type" value="Genomic_DNA"/>
</dbReference>
<dbReference type="EMBL" id="AF393375">
    <property type="protein sequence ID" value="AAM73676.1"/>
    <property type="molecule type" value="Genomic_DNA"/>
</dbReference>
<dbReference type="EMBL" id="AK300675">
    <property type="protein sequence ID" value="BAH13325.1"/>
    <property type="molecule type" value="mRNA"/>
</dbReference>
<dbReference type="EMBL" id="AL592424">
    <property type="status" value="NOT_ANNOTATED_CDS"/>
    <property type="molecule type" value="Genomic_DNA"/>
</dbReference>
<dbReference type="EMBL" id="CH471121">
    <property type="protein sequence ID" value="EAW53465.1"/>
    <property type="molecule type" value="Genomic_DNA"/>
</dbReference>
<dbReference type="EMBL" id="BC017810">
    <property type="protein sequence ID" value="AAH17810.1"/>
    <property type="molecule type" value="mRNA"/>
</dbReference>
<dbReference type="CCDS" id="CCDS988.1">
    <molecule id="Q9NZQ9-1"/>
</dbReference>
<dbReference type="RefSeq" id="NP_037485.2">
    <molecule id="Q9NZQ9-1"/>
    <property type="nucleotide sequence ID" value="NM_013353.3"/>
</dbReference>
<dbReference type="RefSeq" id="XP_011507751.1">
    <molecule id="Q9NZQ9-1"/>
    <property type="nucleotide sequence ID" value="XM_011509449.2"/>
</dbReference>
<dbReference type="RefSeq" id="XP_016856578.1">
    <property type="nucleotide sequence ID" value="XM_017001089.1"/>
</dbReference>
<dbReference type="RefSeq" id="XP_047274628.1">
    <molecule id="Q9NZQ9-1"/>
    <property type="nucleotide sequence ID" value="XM_047418672.1"/>
</dbReference>
<dbReference type="RefSeq" id="XP_054192147.1">
    <molecule id="Q9NZQ9-1"/>
    <property type="nucleotide sequence ID" value="XM_054336172.1"/>
</dbReference>
<dbReference type="RefSeq" id="XP_054192148.1">
    <molecule id="Q9NZQ9-1"/>
    <property type="nucleotide sequence ID" value="XM_054336173.1"/>
</dbReference>
<dbReference type="SMR" id="Q9NZQ9"/>
<dbReference type="BioGRID" id="118898">
    <property type="interactions" value="29"/>
</dbReference>
<dbReference type="FunCoup" id="Q9NZQ9">
    <property type="interactions" value="108"/>
</dbReference>
<dbReference type="IntAct" id="Q9NZQ9">
    <property type="interactions" value="26"/>
</dbReference>
<dbReference type="STRING" id="9606.ENSP00000295314"/>
<dbReference type="iPTMnet" id="Q9NZQ9"/>
<dbReference type="PhosphoSitePlus" id="Q9NZQ9"/>
<dbReference type="BioMuta" id="TMOD4"/>
<dbReference type="DMDM" id="23396885"/>
<dbReference type="jPOST" id="Q9NZQ9"/>
<dbReference type="MassIVE" id="Q9NZQ9"/>
<dbReference type="PaxDb" id="9606-ENSP00000295314"/>
<dbReference type="PeptideAtlas" id="Q9NZQ9"/>
<dbReference type="ProteomicsDB" id="6792"/>
<dbReference type="ProteomicsDB" id="83489">
    <molecule id="Q9NZQ9-1"/>
</dbReference>
<dbReference type="Antibodypedia" id="34056">
    <property type="antibodies" value="162 antibodies from 26 providers"/>
</dbReference>
<dbReference type="DNASU" id="29765"/>
<dbReference type="Ensembl" id="ENST00000295314.9">
    <molecule id="Q9NZQ9-1"/>
    <property type="protein sequence ID" value="ENSP00000295314.4"/>
    <property type="gene ID" value="ENSG00000163157.15"/>
</dbReference>
<dbReference type="GeneID" id="29765"/>
<dbReference type="KEGG" id="hsa:29765"/>
<dbReference type="MANE-Select" id="ENST00000295314.9">
    <property type="protein sequence ID" value="ENSP00000295314.4"/>
    <property type="RefSeq nucleotide sequence ID" value="NM_013353.3"/>
    <property type="RefSeq protein sequence ID" value="NP_037485.2"/>
</dbReference>
<dbReference type="UCSC" id="uc001exc.5">
    <molecule id="Q9NZQ9-1"/>
    <property type="organism name" value="human"/>
</dbReference>
<dbReference type="AGR" id="HGNC:11874"/>
<dbReference type="CTD" id="29765"/>
<dbReference type="DisGeNET" id="29765"/>
<dbReference type="GeneCards" id="TMOD4"/>
<dbReference type="HGNC" id="HGNC:11874">
    <property type="gene designation" value="TMOD4"/>
</dbReference>
<dbReference type="HPA" id="ENSG00000163157">
    <property type="expression patterns" value="Group enriched (skeletal muscle, tongue)"/>
</dbReference>
<dbReference type="MIM" id="605834">
    <property type="type" value="gene"/>
</dbReference>
<dbReference type="neXtProt" id="NX_Q9NZQ9"/>
<dbReference type="OpenTargets" id="ENSG00000163157"/>
<dbReference type="PharmGKB" id="PA36575"/>
<dbReference type="VEuPathDB" id="HostDB:ENSG00000163157"/>
<dbReference type="eggNOG" id="KOG3735">
    <property type="taxonomic scope" value="Eukaryota"/>
</dbReference>
<dbReference type="GeneTree" id="ENSGT00940000158734"/>
<dbReference type="HOGENOM" id="CLU_031052_0_1_1"/>
<dbReference type="InParanoid" id="Q9NZQ9"/>
<dbReference type="OMA" id="SDAEMCD"/>
<dbReference type="OrthoDB" id="2163268at2759"/>
<dbReference type="PAN-GO" id="Q9NZQ9">
    <property type="GO annotations" value="7 GO annotations based on evolutionary models"/>
</dbReference>
<dbReference type="PhylomeDB" id="Q9NZQ9"/>
<dbReference type="TreeFam" id="TF315841"/>
<dbReference type="PathwayCommons" id="Q9NZQ9"/>
<dbReference type="Reactome" id="R-HSA-390522">
    <property type="pathway name" value="Striated Muscle Contraction"/>
</dbReference>
<dbReference type="SignaLink" id="Q9NZQ9"/>
<dbReference type="BioGRID-ORCS" id="29765">
    <property type="hits" value="13 hits in 1080 CRISPR screens"/>
</dbReference>
<dbReference type="GeneWiki" id="TMOD4"/>
<dbReference type="GenomeRNAi" id="29765"/>
<dbReference type="Pharos" id="Q9NZQ9">
    <property type="development level" value="Tbio"/>
</dbReference>
<dbReference type="PRO" id="PR:Q9NZQ9"/>
<dbReference type="Proteomes" id="UP000005640">
    <property type="component" value="Chromosome 1"/>
</dbReference>
<dbReference type="RNAct" id="Q9NZQ9">
    <property type="molecule type" value="protein"/>
</dbReference>
<dbReference type="Bgee" id="ENSG00000163157">
    <property type="expression patterns" value="Expressed in vastus lateralis and 109 other cell types or tissues"/>
</dbReference>
<dbReference type="ExpressionAtlas" id="Q9NZQ9">
    <property type="expression patterns" value="baseline and differential"/>
</dbReference>
<dbReference type="GO" id="GO:0005856">
    <property type="term" value="C:cytoskeleton"/>
    <property type="evidence" value="ECO:0000318"/>
    <property type="project" value="GO_Central"/>
</dbReference>
<dbReference type="GO" id="GO:0030016">
    <property type="term" value="C:myofibril"/>
    <property type="evidence" value="ECO:0000318"/>
    <property type="project" value="GO_Central"/>
</dbReference>
<dbReference type="GO" id="GO:0005865">
    <property type="term" value="C:striated muscle thin filament"/>
    <property type="evidence" value="ECO:0000314"/>
    <property type="project" value="UniProtKB"/>
</dbReference>
<dbReference type="GO" id="GO:0003779">
    <property type="term" value="F:actin binding"/>
    <property type="evidence" value="ECO:0007669"/>
    <property type="project" value="UniProtKB-KW"/>
</dbReference>
<dbReference type="GO" id="GO:0005523">
    <property type="term" value="F:tropomyosin binding"/>
    <property type="evidence" value="ECO:0000318"/>
    <property type="project" value="GO_Central"/>
</dbReference>
<dbReference type="GO" id="GO:0007015">
    <property type="term" value="P:actin filament organization"/>
    <property type="evidence" value="ECO:0000318"/>
    <property type="project" value="GO_Central"/>
</dbReference>
<dbReference type="GO" id="GO:0006936">
    <property type="term" value="P:muscle contraction"/>
    <property type="evidence" value="ECO:0000318"/>
    <property type="project" value="GO_Central"/>
</dbReference>
<dbReference type="GO" id="GO:0030239">
    <property type="term" value="P:myofibril assembly"/>
    <property type="evidence" value="ECO:0000318"/>
    <property type="project" value="GO_Central"/>
</dbReference>
<dbReference type="GO" id="GO:0051694">
    <property type="term" value="P:pointed-end actin filament capping"/>
    <property type="evidence" value="ECO:0007669"/>
    <property type="project" value="InterPro"/>
</dbReference>
<dbReference type="FunFam" id="3.80.10.10:FF:000006">
    <property type="entry name" value="Tropomodulin 2"/>
    <property type="match status" value="1"/>
</dbReference>
<dbReference type="Gene3D" id="3.80.10.10">
    <property type="entry name" value="Ribonuclease Inhibitor"/>
    <property type="match status" value="1"/>
</dbReference>
<dbReference type="InterPro" id="IPR032675">
    <property type="entry name" value="LRR_dom_sf"/>
</dbReference>
<dbReference type="InterPro" id="IPR004934">
    <property type="entry name" value="TMOD"/>
</dbReference>
<dbReference type="PANTHER" id="PTHR10901">
    <property type="entry name" value="TROPOMODULIN"/>
    <property type="match status" value="1"/>
</dbReference>
<dbReference type="PANTHER" id="PTHR10901:SF9">
    <property type="entry name" value="TROPOMODULIN-4"/>
    <property type="match status" value="1"/>
</dbReference>
<dbReference type="Pfam" id="PF03250">
    <property type="entry name" value="Tropomodulin"/>
    <property type="match status" value="1"/>
</dbReference>
<dbReference type="SUPFAM" id="SSF52047">
    <property type="entry name" value="RNI-like"/>
    <property type="match status" value="1"/>
</dbReference>
<accession>Q9NZQ9</accession>
<accession>B7Z6N9</accession>
<accession>Q5JR83</accession>
<accession>Q8WVL3</accession>
<accession>Q9UKH2</accession>
<protein>
    <recommendedName>
        <fullName>Tropomodulin-4</fullName>
    </recommendedName>
    <alternativeName>
        <fullName>Skeletal muscle tropomodulin</fullName>
        <shortName>Sk-Tmod</shortName>
    </alternativeName>
</protein>
<feature type="chain" id="PRO_0000186136" description="Tropomodulin-4">
    <location>
        <begin position="1"/>
        <end position="345"/>
    </location>
</feature>
<feature type="region of interest" description="Disordered" evidence="1">
    <location>
        <begin position="42"/>
        <end position="63"/>
    </location>
</feature>
<feature type="splice variant" id="VSP_056865" description="In isoform 2." evidence="4">
    <location>
        <begin position="95"/>
        <end position="163"/>
    </location>
</feature>
<feature type="sequence variant" id="VAR_052400" description="In dbSNP:rs11800088.">
    <original>N</original>
    <variation>S</variation>
    <location>
        <position position="336"/>
    </location>
</feature>
<feature type="sequence conflict" description="In Ref. 1; AAF01277." evidence="5" ref="1">
    <original>T</original>
    <variation>I</variation>
    <location>
        <position position="283"/>
    </location>
</feature>
<feature type="sequence conflict" description="In Ref. 8; AAH17810." evidence="5" ref="8">
    <original>C</original>
    <variation>R</variation>
    <location>
        <position position="309"/>
    </location>
</feature>
<gene>
    <name type="primary">TMOD4</name>
</gene>
<comment type="function">
    <text>Blocks the elongation and depolymerization of the actin filaments at the pointed end. The Tmod/TM complex contributes to the formation of the short actin protofilament, which in turn defines the geometry of the membrane skeleton.</text>
</comment>
<comment type="subunit">
    <text>Binds to the N-terminus of tropomyosin and to actin.</text>
</comment>
<comment type="interaction">
    <interactant intactId="EBI-9393504">
        <id>Q9NZQ9</id>
    </interactant>
    <interactant intactId="EBI-2932492">
        <id>Q99757</id>
        <label>TXN2</label>
    </interactant>
    <organismsDiffer>false</organismsDiffer>
    <experiments>3</experiments>
</comment>
<comment type="subcellular location">
    <subcellularLocation>
        <location evidence="3">Cytoplasm</location>
        <location evidence="3">Cytoskeleton</location>
    </subcellularLocation>
    <text evidence="3">In myofibrils with sarcomeric structure, localizes to the pointed end of actin thin filaments (PubMed:25250574).</text>
</comment>
<comment type="alternative products">
    <event type="alternative splicing"/>
    <isoform>
        <id>Q9NZQ9-1</id>
        <name>1</name>
        <sequence type="displayed"/>
    </isoform>
    <isoform>
        <id>Q9NZQ9-2</id>
        <name>2</name>
        <sequence type="described" ref="VSP_056865"/>
    </isoform>
</comment>
<comment type="tissue specificity">
    <text evidence="2">Highly expressed in skeletal muscle.</text>
</comment>
<comment type="similarity">
    <text evidence="5">Belongs to the tropomodulin family.</text>
</comment>
<proteinExistence type="evidence at protein level"/>
<organism>
    <name type="scientific">Homo sapiens</name>
    <name type="common">Human</name>
    <dbReference type="NCBI Taxonomy" id="9606"/>
    <lineage>
        <taxon>Eukaryota</taxon>
        <taxon>Metazoa</taxon>
        <taxon>Chordata</taxon>
        <taxon>Craniata</taxon>
        <taxon>Vertebrata</taxon>
        <taxon>Euteleostomi</taxon>
        <taxon>Mammalia</taxon>
        <taxon>Eutheria</taxon>
        <taxon>Euarchontoglires</taxon>
        <taxon>Primates</taxon>
        <taxon>Haplorrhini</taxon>
        <taxon>Catarrhini</taxon>
        <taxon>Hominidae</taxon>
        <taxon>Homo</taxon>
    </lineage>
</organism>
<sequence length="345" mass="39335">MSSYQKELEKYRDIDEDEILRTLSPEELEQLDCELQEMDPENMLLPAGLRQRDQTKKSPTGPLDREALLQYLEQQALEVKERDDLVPFTGEKKGKPYIQPKREIPAEEQITLEPELEEALAHATDAEMCDIAAILDMYTLMSNKQYYDALCSGEICNTEGISSVVQPDKYKPVPDEPPNPTNIEEILKRVRSNDKELEEVNLNNIQDIPIPMLSELCEAMKANTYVRSFSLVATRSGDPIANAVADMLRENRSLQSLNIESNFISSTGLMAVLKAVRENATLTELRVDNQRQWPGDAVEMEMATVLEQCPSIVRFGYHFTQQGPRARAAQAMTRNNELRRQQKKR</sequence>
<evidence type="ECO:0000256" key="1">
    <source>
        <dbReference type="SAM" id="MobiDB-lite"/>
    </source>
</evidence>
<evidence type="ECO:0000269" key="2">
    <source>
    </source>
</evidence>
<evidence type="ECO:0000269" key="3">
    <source>
    </source>
</evidence>
<evidence type="ECO:0000303" key="4">
    <source>
    </source>
</evidence>
<evidence type="ECO:0000305" key="5"/>
<keyword id="KW-0009">Actin-binding</keyword>
<keyword id="KW-0025">Alternative splicing</keyword>
<keyword id="KW-0963">Cytoplasm</keyword>
<keyword id="KW-0206">Cytoskeleton</keyword>
<keyword id="KW-1267">Proteomics identification</keyword>
<keyword id="KW-1185">Reference proteome</keyword>
<reference key="1">
    <citation type="journal article" date="1999" name="J. Biol. Chem.">
        <title>Identification of a novel tropomodulin isoform, skeletal tropomodulin, that caps actin filament pointed ends in fast skeletal muscle.</title>
        <authorList>
            <person name="Almenar-Queralt A."/>
            <person name="Lee A."/>
            <person name="Conley C.A."/>
            <person name="Ribas de Pouplana L."/>
            <person name="Fowler V.M."/>
        </authorList>
    </citation>
    <scope>NUCLEOTIDE SEQUENCE [MRNA] (ISOFORM 1)</scope>
</reference>
<reference key="2">
    <citation type="journal article" date="2000" name="Genomics">
        <title>Sequencing, expression analysis, and mapping of three unique human tropomodulin genes and their mouse orthologs.</title>
        <authorList>
            <person name="Cox P.R."/>
            <person name="Zoghbi H.Y."/>
        </authorList>
    </citation>
    <scope>NUCLEOTIDE SEQUENCE [MRNA] (ISOFORM 1)</scope>
    <scope>TISSUE SPECIFICITY</scope>
</reference>
<reference key="3">
    <citation type="submission" date="2000-11" db="EMBL/GenBank/DDBJ databases">
        <title>Homo sapiens tropomodulin 4 (TMOD4) genomic sequence.</title>
        <authorList>
            <person name="Durling H.J."/>
            <person name="Laing N.G."/>
        </authorList>
    </citation>
    <scope>NUCLEOTIDE SEQUENCE [GENOMIC DNA]</scope>
</reference>
<reference key="4">
    <citation type="submission" date="2001-06" db="EMBL/GenBank/DDBJ databases">
        <title>Genomic organization of tropomodulins 2 and 4 and intergenic splicing of YL-1 and TMOD4.</title>
        <authorList>
            <person name="Cox P.R."/>
            <person name="Siddique T."/>
            <person name="Zoghbi H.Y."/>
        </authorList>
    </citation>
    <scope>NUCLEOTIDE SEQUENCE [GENOMIC DNA]</scope>
</reference>
<reference key="5">
    <citation type="journal article" date="2004" name="Nat. Genet.">
        <title>Complete sequencing and characterization of 21,243 full-length human cDNAs.</title>
        <authorList>
            <person name="Ota T."/>
            <person name="Suzuki Y."/>
            <person name="Nishikawa T."/>
            <person name="Otsuki T."/>
            <person name="Sugiyama T."/>
            <person name="Irie R."/>
            <person name="Wakamatsu A."/>
            <person name="Hayashi K."/>
            <person name="Sato H."/>
            <person name="Nagai K."/>
            <person name="Kimura K."/>
            <person name="Makita H."/>
            <person name="Sekine M."/>
            <person name="Obayashi M."/>
            <person name="Nishi T."/>
            <person name="Shibahara T."/>
            <person name="Tanaka T."/>
            <person name="Ishii S."/>
            <person name="Yamamoto J."/>
            <person name="Saito K."/>
            <person name="Kawai Y."/>
            <person name="Isono Y."/>
            <person name="Nakamura Y."/>
            <person name="Nagahari K."/>
            <person name="Murakami K."/>
            <person name="Yasuda T."/>
            <person name="Iwayanagi T."/>
            <person name="Wagatsuma M."/>
            <person name="Shiratori A."/>
            <person name="Sudo H."/>
            <person name="Hosoiri T."/>
            <person name="Kaku Y."/>
            <person name="Kodaira H."/>
            <person name="Kondo H."/>
            <person name="Sugawara M."/>
            <person name="Takahashi M."/>
            <person name="Kanda K."/>
            <person name="Yokoi T."/>
            <person name="Furuya T."/>
            <person name="Kikkawa E."/>
            <person name="Omura Y."/>
            <person name="Abe K."/>
            <person name="Kamihara K."/>
            <person name="Katsuta N."/>
            <person name="Sato K."/>
            <person name="Tanikawa M."/>
            <person name="Yamazaki M."/>
            <person name="Ninomiya K."/>
            <person name="Ishibashi T."/>
            <person name="Yamashita H."/>
            <person name="Murakawa K."/>
            <person name="Fujimori K."/>
            <person name="Tanai H."/>
            <person name="Kimata M."/>
            <person name="Watanabe M."/>
            <person name="Hiraoka S."/>
            <person name="Chiba Y."/>
            <person name="Ishida S."/>
            <person name="Ono Y."/>
            <person name="Takiguchi S."/>
            <person name="Watanabe S."/>
            <person name="Yosida M."/>
            <person name="Hotuta T."/>
            <person name="Kusano J."/>
            <person name="Kanehori K."/>
            <person name="Takahashi-Fujii A."/>
            <person name="Hara H."/>
            <person name="Tanase T.-O."/>
            <person name="Nomura Y."/>
            <person name="Togiya S."/>
            <person name="Komai F."/>
            <person name="Hara R."/>
            <person name="Takeuchi K."/>
            <person name="Arita M."/>
            <person name="Imose N."/>
            <person name="Musashino K."/>
            <person name="Yuuki H."/>
            <person name="Oshima A."/>
            <person name="Sasaki N."/>
            <person name="Aotsuka S."/>
            <person name="Yoshikawa Y."/>
            <person name="Matsunawa H."/>
            <person name="Ichihara T."/>
            <person name="Shiohata N."/>
            <person name="Sano S."/>
            <person name="Moriya S."/>
            <person name="Momiyama H."/>
            <person name="Satoh N."/>
            <person name="Takami S."/>
            <person name="Terashima Y."/>
            <person name="Suzuki O."/>
            <person name="Nakagawa S."/>
            <person name="Senoh A."/>
            <person name="Mizoguchi H."/>
            <person name="Goto Y."/>
            <person name="Shimizu F."/>
            <person name="Wakebe H."/>
            <person name="Hishigaki H."/>
            <person name="Watanabe T."/>
            <person name="Sugiyama A."/>
            <person name="Takemoto M."/>
            <person name="Kawakami B."/>
            <person name="Yamazaki M."/>
            <person name="Watanabe K."/>
            <person name="Kumagai A."/>
            <person name="Itakura S."/>
            <person name="Fukuzumi Y."/>
            <person name="Fujimori Y."/>
            <person name="Komiyama M."/>
            <person name="Tashiro H."/>
            <person name="Tanigami A."/>
            <person name="Fujiwara T."/>
            <person name="Ono T."/>
            <person name="Yamada K."/>
            <person name="Fujii Y."/>
            <person name="Ozaki K."/>
            <person name="Hirao M."/>
            <person name="Ohmori Y."/>
            <person name="Kawabata A."/>
            <person name="Hikiji T."/>
            <person name="Kobatake N."/>
            <person name="Inagaki H."/>
            <person name="Ikema Y."/>
            <person name="Okamoto S."/>
            <person name="Okitani R."/>
            <person name="Kawakami T."/>
            <person name="Noguchi S."/>
            <person name="Itoh T."/>
            <person name="Shigeta K."/>
            <person name="Senba T."/>
            <person name="Matsumura K."/>
            <person name="Nakajima Y."/>
            <person name="Mizuno T."/>
            <person name="Morinaga M."/>
            <person name="Sasaki M."/>
            <person name="Togashi T."/>
            <person name="Oyama M."/>
            <person name="Hata H."/>
            <person name="Watanabe M."/>
            <person name="Komatsu T."/>
            <person name="Mizushima-Sugano J."/>
            <person name="Satoh T."/>
            <person name="Shirai Y."/>
            <person name="Takahashi Y."/>
            <person name="Nakagawa K."/>
            <person name="Okumura K."/>
            <person name="Nagase T."/>
            <person name="Nomura N."/>
            <person name="Kikuchi H."/>
            <person name="Masuho Y."/>
            <person name="Yamashita R."/>
            <person name="Nakai K."/>
            <person name="Yada T."/>
            <person name="Nakamura Y."/>
            <person name="Ohara O."/>
            <person name="Isogai T."/>
            <person name="Sugano S."/>
        </authorList>
    </citation>
    <scope>NUCLEOTIDE SEQUENCE [LARGE SCALE MRNA] (ISOFORM 2)</scope>
    <source>
        <tissue>Skeletal muscle</tissue>
    </source>
</reference>
<reference key="6">
    <citation type="journal article" date="2006" name="Nature">
        <title>The DNA sequence and biological annotation of human chromosome 1.</title>
        <authorList>
            <person name="Gregory S.G."/>
            <person name="Barlow K.F."/>
            <person name="McLay K.E."/>
            <person name="Kaul R."/>
            <person name="Swarbreck D."/>
            <person name="Dunham A."/>
            <person name="Scott C.E."/>
            <person name="Howe K.L."/>
            <person name="Woodfine K."/>
            <person name="Spencer C.C.A."/>
            <person name="Jones M.C."/>
            <person name="Gillson C."/>
            <person name="Searle S."/>
            <person name="Zhou Y."/>
            <person name="Kokocinski F."/>
            <person name="McDonald L."/>
            <person name="Evans R."/>
            <person name="Phillips K."/>
            <person name="Atkinson A."/>
            <person name="Cooper R."/>
            <person name="Jones C."/>
            <person name="Hall R.E."/>
            <person name="Andrews T.D."/>
            <person name="Lloyd C."/>
            <person name="Ainscough R."/>
            <person name="Almeida J.P."/>
            <person name="Ambrose K.D."/>
            <person name="Anderson F."/>
            <person name="Andrew R.W."/>
            <person name="Ashwell R.I.S."/>
            <person name="Aubin K."/>
            <person name="Babbage A.K."/>
            <person name="Bagguley C.L."/>
            <person name="Bailey J."/>
            <person name="Beasley H."/>
            <person name="Bethel G."/>
            <person name="Bird C.P."/>
            <person name="Bray-Allen S."/>
            <person name="Brown J.Y."/>
            <person name="Brown A.J."/>
            <person name="Buckley D."/>
            <person name="Burton J."/>
            <person name="Bye J."/>
            <person name="Carder C."/>
            <person name="Chapman J.C."/>
            <person name="Clark S.Y."/>
            <person name="Clarke G."/>
            <person name="Clee C."/>
            <person name="Cobley V."/>
            <person name="Collier R.E."/>
            <person name="Corby N."/>
            <person name="Coville G.J."/>
            <person name="Davies J."/>
            <person name="Deadman R."/>
            <person name="Dunn M."/>
            <person name="Earthrowl M."/>
            <person name="Ellington A.G."/>
            <person name="Errington H."/>
            <person name="Frankish A."/>
            <person name="Frankland J."/>
            <person name="French L."/>
            <person name="Garner P."/>
            <person name="Garnett J."/>
            <person name="Gay L."/>
            <person name="Ghori M.R.J."/>
            <person name="Gibson R."/>
            <person name="Gilby L.M."/>
            <person name="Gillett W."/>
            <person name="Glithero R.J."/>
            <person name="Grafham D.V."/>
            <person name="Griffiths C."/>
            <person name="Griffiths-Jones S."/>
            <person name="Grocock R."/>
            <person name="Hammond S."/>
            <person name="Harrison E.S.I."/>
            <person name="Hart E."/>
            <person name="Haugen E."/>
            <person name="Heath P.D."/>
            <person name="Holmes S."/>
            <person name="Holt K."/>
            <person name="Howden P.J."/>
            <person name="Hunt A.R."/>
            <person name="Hunt S.E."/>
            <person name="Hunter G."/>
            <person name="Isherwood J."/>
            <person name="James R."/>
            <person name="Johnson C."/>
            <person name="Johnson D."/>
            <person name="Joy A."/>
            <person name="Kay M."/>
            <person name="Kershaw J.K."/>
            <person name="Kibukawa M."/>
            <person name="Kimberley A.M."/>
            <person name="King A."/>
            <person name="Knights A.J."/>
            <person name="Lad H."/>
            <person name="Laird G."/>
            <person name="Lawlor S."/>
            <person name="Leongamornlert D.A."/>
            <person name="Lloyd D.M."/>
            <person name="Loveland J."/>
            <person name="Lovell J."/>
            <person name="Lush M.J."/>
            <person name="Lyne R."/>
            <person name="Martin S."/>
            <person name="Mashreghi-Mohammadi M."/>
            <person name="Matthews L."/>
            <person name="Matthews N.S.W."/>
            <person name="McLaren S."/>
            <person name="Milne S."/>
            <person name="Mistry S."/>
            <person name="Moore M.J.F."/>
            <person name="Nickerson T."/>
            <person name="O'Dell C.N."/>
            <person name="Oliver K."/>
            <person name="Palmeiri A."/>
            <person name="Palmer S.A."/>
            <person name="Parker A."/>
            <person name="Patel D."/>
            <person name="Pearce A.V."/>
            <person name="Peck A.I."/>
            <person name="Pelan S."/>
            <person name="Phelps K."/>
            <person name="Phillimore B.J."/>
            <person name="Plumb R."/>
            <person name="Rajan J."/>
            <person name="Raymond C."/>
            <person name="Rouse G."/>
            <person name="Saenphimmachak C."/>
            <person name="Sehra H.K."/>
            <person name="Sheridan E."/>
            <person name="Shownkeen R."/>
            <person name="Sims S."/>
            <person name="Skuce C.D."/>
            <person name="Smith M."/>
            <person name="Steward C."/>
            <person name="Subramanian S."/>
            <person name="Sycamore N."/>
            <person name="Tracey A."/>
            <person name="Tromans A."/>
            <person name="Van Helmond Z."/>
            <person name="Wall M."/>
            <person name="Wallis J.M."/>
            <person name="White S."/>
            <person name="Whitehead S.L."/>
            <person name="Wilkinson J.E."/>
            <person name="Willey D.L."/>
            <person name="Williams H."/>
            <person name="Wilming L."/>
            <person name="Wray P.W."/>
            <person name="Wu Z."/>
            <person name="Coulson A."/>
            <person name="Vaudin M."/>
            <person name="Sulston J.E."/>
            <person name="Durbin R.M."/>
            <person name="Hubbard T."/>
            <person name="Wooster R."/>
            <person name="Dunham I."/>
            <person name="Carter N.P."/>
            <person name="McVean G."/>
            <person name="Ross M.T."/>
            <person name="Harrow J."/>
            <person name="Olson M.V."/>
            <person name="Beck S."/>
            <person name="Rogers J."/>
            <person name="Bentley D.R."/>
        </authorList>
    </citation>
    <scope>NUCLEOTIDE SEQUENCE [LARGE SCALE GENOMIC DNA]</scope>
</reference>
<reference key="7">
    <citation type="submission" date="2005-09" db="EMBL/GenBank/DDBJ databases">
        <authorList>
            <person name="Mural R.J."/>
            <person name="Istrail S."/>
            <person name="Sutton G.G."/>
            <person name="Florea L."/>
            <person name="Halpern A.L."/>
            <person name="Mobarry C.M."/>
            <person name="Lippert R."/>
            <person name="Walenz B."/>
            <person name="Shatkay H."/>
            <person name="Dew I."/>
            <person name="Miller J.R."/>
            <person name="Flanigan M.J."/>
            <person name="Edwards N.J."/>
            <person name="Bolanos R."/>
            <person name="Fasulo D."/>
            <person name="Halldorsson B.V."/>
            <person name="Hannenhalli S."/>
            <person name="Turner R."/>
            <person name="Yooseph S."/>
            <person name="Lu F."/>
            <person name="Nusskern D.R."/>
            <person name="Shue B.C."/>
            <person name="Zheng X.H."/>
            <person name="Zhong F."/>
            <person name="Delcher A.L."/>
            <person name="Huson D.H."/>
            <person name="Kravitz S.A."/>
            <person name="Mouchard L."/>
            <person name="Reinert K."/>
            <person name="Remington K.A."/>
            <person name="Clark A.G."/>
            <person name="Waterman M.S."/>
            <person name="Eichler E.E."/>
            <person name="Adams M.D."/>
            <person name="Hunkapiller M.W."/>
            <person name="Myers E.W."/>
            <person name="Venter J.C."/>
        </authorList>
    </citation>
    <scope>NUCLEOTIDE SEQUENCE [LARGE SCALE GENOMIC DNA]</scope>
</reference>
<reference key="8">
    <citation type="journal article" date="2004" name="Genome Res.">
        <title>The status, quality, and expansion of the NIH full-length cDNA project: the Mammalian Gene Collection (MGC).</title>
        <authorList>
            <consortium name="The MGC Project Team"/>
        </authorList>
    </citation>
    <scope>NUCLEOTIDE SEQUENCE [LARGE SCALE MRNA] (ISOFORM 1)</scope>
    <source>
        <tissue>Skeletal muscle</tissue>
    </source>
</reference>
<reference key="9">
    <citation type="journal article" date="2014" name="J. Clin. Invest.">
        <title>Leiomodin-3 dysfunction results in thin filament disorganization and nemaline myopathy.</title>
        <authorList>
            <person name="Yuen M."/>
            <person name="Sandaradura S.A."/>
            <person name="Dowling J.J."/>
            <person name="Kostyukova A.S."/>
            <person name="Moroz N."/>
            <person name="Quinlan K.G."/>
            <person name="Lehtokari V.L."/>
            <person name="Ravenscroft G."/>
            <person name="Todd E.J."/>
            <person name="Ceyhan-Birsoy O."/>
            <person name="Gokhin D.S."/>
            <person name="Maluenda J."/>
            <person name="Lek M."/>
            <person name="Nolent F."/>
            <person name="Pappas C.T."/>
            <person name="Novak S.M."/>
            <person name="D'Amico A."/>
            <person name="Malfatti E."/>
            <person name="Thomas B.P."/>
            <person name="Gabriel S.B."/>
            <person name="Gupta N."/>
            <person name="Daly M.J."/>
            <person name="Ilkovski B."/>
            <person name="Houweling P.J."/>
            <person name="Davidson A.E."/>
            <person name="Swanson L.C."/>
            <person name="Brownstein C.A."/>
            <person name="Gupta V.A."/>
            <person name="Medne L."/>
            <person name="Shannon P."/>
            <person name="Martin N."/>
            <person name="Bick D.P."/>
            <person name="Flisberg A."/>
            <person name="Holmberg E."/>
            <person name="Van den Bergh P."/>
            <person name="Lapunzina P."/>
            <person name="Waddell L.B."/>
            <person name="Sloboda D.D."/>
            <person name="Bertini E."/>
            <person name="Chitayat D."/>
            <person name="Telfer W.R."/>
            <person name="Laquerriere A."/>
            <person name="Gregorio C.C."/>
            <person name="Ottenheijm C.A."/>
            <person name="Boennemann C.G."/>
            <person name="Pelin K."/>
            <person name="Beggs A.H."/>
            <person name="Hayashi Y.K."/>
            <person name="Romero N.B."/>
            <person name="Laing N.G."/>
            <person name="Nishino I."/>
            <person name="Wallgren-Pettersson C."/>
            <person name="Melki J."/>
            <person name="Fowler V.M."/>
            <person name="MacArthur D.G."/>
            <person name="North K.N."/>
            <person name="Clarke N.F."/>
        </authorList>
    </citation>
    <scope>SUBCELLULAR LOCATION</scope>
</reference>